<organism>
    <name type="scientific">Escherichia coli O1:K1 / APEC</name>
    <dbReference type="NCBI Taxonomy" id="405955"/>
    <lineage>
        <taxon>Bacteria</taxon>
        <taxon>Pseudomonadati</taxon>
        <taxon>Pseudomonadota</taxon>
        <taxon>Gammaproteobacteria</taxon>
        <taxon>Enterobacterales</taxon>
        <taxon>Enterobacteriaceae</taxon>
        <taxon>Escherichia</taxon>
    </lineage>
</organism>
<name>RHAS_ECOK1</name>
<comment type="function">
    <text evidence="1">Activates expression of the rhaBAD and rhaT operons.</text>
</comment>
<comment type="subunit">
    <text evidence="1">Binds DNA as a dimer.</text>
</comment>
<comment type="subcellular location">
    <subcellularLocation>
        <location evidence="1">Cytoplasm</location>
    </subcellularLocation>
</comment>
<sequence length="278" mass="32402">MTVLHSVDFFPSGNASVAIEPRLPQADFPEHHHDFHEIVIVEHGTGIHVFNGQPYTITGGTVCFVRDHDRHLYEHTDNLCLTNVLYRSPDRFQFLAGLNQLLPQEQDGQYPSHWRVNHSVLQQVRQLVAQMEQQEEENDLPSTASREILFMQLLLLLRKSSLQENLENSASRLNLLLAWLEDHFADEVNWDAVADQFSLSLRTLHRQLKQKTGLTPQRYLNRLRLMKARHLLRHSEASVTDIAYRCGFSDSNHFSTLFRREFNWSPRDIRQGRDGFLQ</sequence>
<protein>
    <recommendedName>
        <fullName evidence="1">HTH-type transcriptional activator RhaS</fullName>
    </recommendedName>
    <alternativeName>
        <fullName evidence="1">L-rhamnose operon regulatory protein RhaS</fullName>
    </alternativeName>
</protein>
<proteinExistence type="inferred from homology"/>
<evidence type="ECO:0000255" key="1">
    <source>
        <dbReference type="HAMAP-Rule" id="MF_01534"/>
    </source>
</evidence>
<feature type="chain" id="PRO_1000068702" description="HTH-type transcriptional activator RhaS">
    <location>
        <begin position="1"/>
        <end position="278"/>
    </location>
</feature>
<feature type="domain" description="HTH araC/xylS-type" evidence="1">
    <location>
        <begin position="174"/>
        <end position="272"/>
    </location>
</feature>
<feature type="DNA-binding region" description="H-T-H motif" evidence="1">
    <location>
        <begin position="191"/>
        <end position="212"/>
    </location>
</feature>
<feature type="DNA-binding region" description="H-T-H motif" evidence="1">
    <location>
        <begin position="239"/>
        <end position="262"/>
    </location>
</feature>
<feature type="site" description="Interaction with sigma-70" evidence="1">
    <location>
        <position position="241"/>
    </location>
</feature>
<feature type="site" description="Interaction with sigma-70" evidence="1">
    <location>
        <position position="250"/>
    </location>
</feature>
<gene>
    <name evidence="1" type="primary">rhaS</name>
    <name type="ordered locus">Ecok1_38780</name>
    <name type="ORF">APECO1_2563</name>
</gene>
<accession>A1AI82</accession>
<reference key="1">
    <citation type="journal article" date="2007" name="J. Bacteriol.">
        <title>The genome sequence of avian pathogenic Escherichia coli strain O1:K1:H7 shares strong similarities with human extraintestinal pathogenic E. coli genomes.</title>
        <authorList>
            <person name="Johnson T.J."/>
            <person name="Kariyawasam S."/>
            <person name="Wannemuehler Y."/>
            <person name="Mangiamele P."/>
            <person name="Johnson S.J."/>
            <person name="Doetkott C."/>
            <person name="Skyberg J.A."/>
            <person name="Lynne A.M."/>
            <person name="Johnson J.R."/>
            <person name="Nolan L.K."/>
        </authorList>
    </citation>
    <scope>NUCLEOTIDE SEQUENCE [LARGE SCALE GENOMIC DNA]</scope>
</reference>
<keyword id="KW-0010">Activator</keyword>
<keyword id="KW-0963">Cytoplasm</keyword>
<keyword id="KW-0238">DNA-binding</keyword>
<keyword id="KW-1185">Reference proteome</keyword>
<keyword id="KW-0677">Repeat</keyword>
<keyword id="KW-0684">Rhamnose metabolism</keyword>
<keyword id="KW-0804">Transcription</keyword>
<keyword id="KW-0805">Transcription regulation</keyword>
<dbReference type="EMBL" id="CP000468">
    <property type="protein sequence ID" value="ABJ03372.1"/>
    <property type="molecule type" value="Genomic_DNA"/>
</dbReference>
<dbReference type="RefSeq" id="WP_000217149.1">
    <property type="nucleotide sequence ID" value="NZ_CADILS010000014.1"/>
</dbReference>
<dbReference type="SMR" id="A1AI82"/>
<dbReference type="KEGG" id="ecv:APECO1_2563"/>
<dbReference type="HOGENOM" id="CLU_000445_88_5_6"/>
<dbReference type="Proteomes" id="UP000008216">
    <property type="component" value="Chromosome"/>
</dbReference>
<dbReference type="GO" id="GO:0005737">
    <property type="term" value="C:cytoplasm"/>
    <property type="evidence" value="ECO:0007669"/>
    <property type="project" value="UniProtKB-SubCell"/>
</dbReference>
<dbReference type="GO" id="GO:0003700">
    <property type="term" value="F:DNA-binding transcription factor activity"/>
    <property type="evidence" value="ECO:0007669"/>
    <property type="project" value="UniProtKB-UniRule"/>
</dbReference>
<dbReference type="GO" id="GO:0043565">
    <property type="term" value="F:sequence-specific DNA binding"/>
    <property type="evidence" value="ECO:0007669"/>
    <property type="project" value="InterPro"/>
</dbReference>
<dbReference type="GO" id="GO:0045893">
    <property type="term" value="P:positive regulation of DNA-templated transcription"/>
    <property type="evidence" value="ECO:0007669"/>
    <property type="project" value="UniProtKB-UniRule"/>
</dbReference>
<dbReference type="GO" id="GO:0019299">
    <property type="term" value="P:rhamnose metabolic process"/>
    <property type="evidence" value="ECO:0007669"/>
    <property type="project" value="UniProtKB-UniRule"/>
</dbReference>
<dbReference type="CDD" id="cd06977">
    <property type="entry name" value="cupin_RhaR_RhaS-like_N"/>
    <property type="match status" value="1"/>
</dbReference>
<dbReference type="FunFam" id="1.10.10.60:FF:000181">
    <property type="entry name" value="HTH-type transcriptional activator RhaS"/>
    <property type="match status" value="1"/>
</dbReference>
<dbReference type="FunFam" id="2.60.120.10:FF:000041">
    <property type="entry name" value="HTH-type transcriptional activator RhaS"/>
    <property type="match status" value="1"/>
</dbReference>
<dbReference type="Gene3D" id="1.10.10.60">
    <property type="entry name" value="Homeodomain-like"/>
    <property type="match status" value="1"/>
</dbReference>
<dbReference type="Gene3D" id="2.60.120.10">
    <property type="entry name" value="Jelly Rolls"/>
    <property type="match status" value="1"/>
</dbReference>
<dbReference type="HAMAP" id="MF_01534">
    <property type="entry name" value="HTH_type_RhaS"/>
    <property type="match status" value="1"/>
</dbReference>
<dbReference type="InterPro" id="IPR003313">
    <property type="entry name" value="AraC-bd"/>
</dbReference>
<dbReference type="InterPro" id="IPR050204">
    <property type="entry name" value="AraC_XylS_family_regulators"/>
</dbReference>
<dbReference type="InterPro" id="IPR009057">
    <property type="entry name" value="Homeodomain-like_sf"/>
</dbReference>
<dbReference type="InterPro" id="IPR037923">
    <property type="entry name" value="HTH-like"/>
</dbReference>
<dbReference type="InterPro" id="IPR018060">
    <property type="entry name" value="HTH_AraC"/>
</dbReference>
<dbReference type="InterPro" id="IPR018062">
    <property type="entry name" value="HTH_AraC-typ_CS"/>
</dbReference>
<dbReference type="InterPro" id="IPR047220">
    <property type="entry name" value="RhaR_RhaS-like_N"/>
</dbReference>
<dbReference type="InterPro" id="IPR014710">
    <property type="entry name" value="RmlC-like_jellyroll"/>
</dbReference>
<dbReference type="InterPro" id="IPR020449">
    <property type="entry name" value="Tscrpt_reg_AraC-type_HTH"/>
</dbReference>
<dbReference type="InterPro" id="IPR023609">
    <property type="entry name" value="Tscrpt_reg_HTH_RhaS"/>
</dbReference>
<dbReference type="NCBIfam" id="NF010028">
    <property type="entry name" value="PRK13503.1"/>
    <property type="match status" value="1"/>
</dbReference>
<dbReference type="PANTHER" id="PTHR46796:SF13">
    <property type="entry name" value="HTH-TYPE TRANSCRIPTIONAL ACTIVATOR RHAS"/>
    <property type="match status" value="1"/>
</dbReference>
<dbReference type="PANTHER" id="PTHR46796">
    <property type="entry name" value="HTH-TYPE TRANSCRIPTIONAL ACTIVATOR RHAS-RELATED"/>
    <property type="match status" value="1"/>
</dbReference>
<dbReference type="Pfam" id="PF02311">
    <property type="entry name" value="AraC_binding"/>
    <property type="match status" value="1"/>
</dbReference>
<dbReference type="Pfam" id="PF12833">
    <property type="entry name" value="HTH_18"/>
    <property type="match status" value="1"/>
</dbReference>
<dbReference type="PRINTS" id="PR00032">
    <property type="entry name" value="HTHARAC"/>
</dbReference>
<dbReference type="SMART" id="SM00342">
    <property type="entry name" value="HTH_ARAC"/>
    <property type="match status" value="1"/>
</dbReference>
<dbReference type="SUPFAM" id="SSF46689">
    <property type="entry name" value="Homeodomain-like"/>
    <property type="match status" value="2"/>
</dbReference>
<dbReference type="SUPFAM" id="SSF51215">
    <property type="entry name" value="Regulatory protein AraC"/>
    <property type="match status" value="1"/>
</dbReference>
<dbReference type="PROSITE" id="PS00041">
    <property type="entry name" value="HTH_ARAC_FAMILY_1"/>
    <property type="match status" value="1"/>
</dbReference>
<dbReference type="PROSITE" id="PS01124">
    <property type="entry name" value="HTH_ARAC_FAMILY_2"/>
    <property type="match status" value="1"/>
</dbReference>